<sequence length="82" mass="9097">MVTIRLARGGAKKRPFYQVVVTDSRNARDGRFIERVGFFNPIASGQAEALRLDLDRIEHWIGLGATVSDRVSVLIKDAKKAA</sequence>
<evidence type="ECO:0000255" key="1">
    <source>
        <dbReference type="HAMAP-Rule" id="MF_00385"/>
    </source>
</evidence>
<evidence type="ECO:0000305" key="2"/>
<proteinExistence type="inferred from homology"/>
<protein>
    <recommendedName>
        <fullName evidence="1">Small ribosomal subunit protein bS16</fullName>
    </recommendedName>
    <alternativeName>
        <fullName evidence="2">30S ribosomal protein S16</fullName>
    </alternativeName>
</protein>
<comment type="similarity">
    <text evidence="1">Belongs to the bacterial ribosomal protein bS16 family.</text>
</comment>
<organism>
    <name type="scientific">Yersinia pseudotuberculosis serotype I (strain IP32953)</name>
    <dbReference type="NCBI Taxonomy" id="273123"/>
    <lineage>
        <taxon>Bacteria</taxon>
        <taxon>Pseudomonadati</taxon>
        <taxon>Pseudomonadota</taxon>
        <taxon>Gammaproteobacteria</taxon>
        <taxon>Enterobacterales</taxon>
        <taxon>Yersiniaceae</taxon>
        <taxon>Yersinia</taxon>
    </lineage>
</organism>
<dbReference type="EMBL" id="BX936398">
    <property type="protein sequence ID" value="CAH20074.1"/>
    <property type="molecule type" value="Genomic_DNA"/>
</dbReference>
<dbReference type="RefSeq" id="WP_002209458.1">
    <property type="nucleotide sequence ID" value="NZ_CP009712.1"/>
</dbReference>
<dbReference type="SMR" id="Q66E59"/>
<dbReference type="GeneID" id="96664341"/>
<dbReference type="KEGG" id="ypo:BZ17_1717"/>
<dbReference type="KEGG" id="yps:YPTB0834"/>
<dbReference type="PATRIC" id="fig|273123.14.peg.1822"/>
<dbReference type="Proteomes" id="UP000001011">
    <property type="component" value="Chromosome"/>
</dbReference>
<dbReference type="GO" id="GO:0005737">
    <property type="term" value="C:cytoplasm"/>
    <property type="evidence" value="ECO:0007669"/>
    <property type="project" value="UniProtKB-ARBA"/>
</dbReference>
<dbReference type="GO" id="GO:0015935">
    <property type="term" value="C:small ribosomal subunit"/>
    <property type="evidence" value="ECO:0007669"/>
    <property type="project" value="TreeGrafter"/>
</dbReference>
<dbReference type="GO" id="GO:0003735">
    <property type="term" value="F:structural constituent of ribosome"/>
    <property type="evidence" value="ECO:0007669"/>
    <property type="project" value="InterPro"/>
</dbReference>
<dbReference type="GO" id="GO:0006412">
    <property type="term" value="P:translation"/>
    <property type="evidence" value="ECO:0007669"/>
    <property type="project" value="UniProtKB-UniRule"/>
</dbReference>
<dbReference type="FunFam" id="3.30.1320.10:FF:000001">
    <property type="entry name" value="30S ribosomal protein S16"/>
    <property type="match status" value="1"/>
</dbReference>
<dbReference type="Gene3D" id="3.30.1320.10">
    <property type="match status" value="1"/>
</dbReference>
<dbReference type="HAMAP" id="MF_00385">
    <property type="entry name" value="Ribosomal_bS16"/>
    <property type="match status" value="1"/>
</dbReference>
<dbReference type="InterPro" id="IPR000307">
    <property type="entry name" value="Ribosomal_bS16"/>
</dbReference>
<dbReference type="InterPro" id="IPR020592">
    <property type="entry name" value="Ribosomal_bS16_CS"/>
</dbReference>
<dbReference type="InterPro" id="IPR023803">
    <property type="entry name" value="Ribosomal_bS16_dom_sf"/>
</dbReference>
<dbReference type="NCBIfam" id="TIGR00002">
    <property type="entry name" value="S16"/>
    <property type="match status" value="1"/>
</dbReference>
<dbReference type="PANTHER" id="PTHR12919">
    <property type="entry name" value="30S RIBOSOMAL PROTEIN S16"/>
    <property type="match status" value="1"/>
</dbReference>
<dbReference type="PANTHER" id="PTHR12919:SF20">
    <property type="entry name" value="SMALL RIBOSOMAL SUBUNIT PROTEIN BS16M"/>
    <property type="match status" value="1"/>
</dbReference>
<dbReference type="Pfam" id="PF00886">
    <property type="entry name" value="Ribosomal_S16"/>
    <property type="match status" value="1"/>
</dbReference>
<dbReference type="SUPFAM" id="SSF54565">
    <property type="entry name" value="Ribosomal protein S16"/>
    <property type="match status" value="1"/>
</dbReference>
<dbReference type="PROSITE" id="PS00732">
    <property type="entry name" value="RIBOSOMAL_S16"/>
    <property type="match status" value="1"/>
</dbReference>
<gene>
    <name evidence="1" type="primary">rpsP</name>
    <name type="ordered locus">YPTB0834</name>
</gene>
<feature type="chain" id="PRO_0000243897" description="Small ribosomal subunit protein bS16">
    <location>
        <begin position="1"/>
        <end position="82"/>
    </location>
</feature>
<keyword id="KW-0687">Ribonucleoprotein</keyword>
<keyword id="KW-0689">Ribosomal protein</keyword>
<reference key="1">
    <citation type="journal article" date="2004" name="Proc. Natl. Acad. Sci. U.S.A.">
        <title>Insights into the evolution of Yersinia pestis through whole-genome comparison with Yersinia pseudotuberculosis.</title>
        <authorList>
            <person name="Chain P.S.G."/>
            <person name="Carniel E."/>
            <person name="Larimer F.W."/>
            <person name="Lamerdin J."/>
            <person name="Stoutland P.O."/>
            <person name="Regala W.M."/>
            <person name="Georgescu A.M."/>
            <person name="Vergez L.M."/>
            <person name="Land M.L."/>
            <person name="Motin V.L."/>
            <person name="Brubaker R.R."/>
            <person name="Fowler J."/>
            <person name="Hinnebusch J."/>
            <person name="Marceau M."/>
            <person name="Medigue C."/>
            <person name="Simonet M."/>
            <person name="Chenal-Francisque V."/>
            <person name="Souza B."/>
            <person name="Dacheux D."/>
            <person name="Elliott J.M."/>
            <person name="Derbise A."/>
            <person name="Hauser L.J."/>
            <person name="Garcia E."/>
        </authorList>
    </citation>
    <scope>NUCLEOTIDE SEQUENCE [LARGE SCALE GENOMIC DNA]</scope>
    <source>
        <strain>IP32953</strain>
    </source>
</reference>
<accession>Q66E59</accession>
<name>RS16_YERPS</name>